<name>YAAA_SALG2</name>
<feature type="chain" id="PRO_1000131139" description="UPF0246 protein YaaA">
    <location>
        <begin position="1"/>
        <end position="257"/>
    </location>
</feature>
<gene>
    <name evidence="1" type="primary">yaaA</name>
    <name type="ordered locus">SG0005</name>
</gene>
<evidence type="ECO:0000255" key="1">
    <source>
        <dbReference type="HAMAP-Rule" id="MF_00652"/>
    </source>
</evidence>
<organism>
    <name type="scientific">Salmonella gallinarum (strain 287/91 / NCTC 13346)</name>
    <dbReference type="NCBI Taxonomy" id="550538"/>
    <lineage>
        <taxon>Bacteria</taxon>
        <taxon>Pseudomonadati</taxon>
        <taxon>Pseudomonadota</taxon>
        <taxon>Gammaproteobacteria</taxon>
        <taxon>Enterobacterales</taxon>
        <taxon>Enterobacteriaceae</taxon>
        <taxon>Salmonella</taxon>
    </lineage>
</organism>
<dbReference type="EMBL" id="AM933173">
    <property type="protein sequence ID" value="CAR35915.1"/>
    <property type="molecule type" value="Genomic_DNA"/>
</dbReference>
<dbReference type="RefSeq" id="WP_000906175.1">
    <property type="nucleotide sequence ID" value="NC_011274.1"/>
</dbReference>
<dbReference type="SMR" id="B5RF01"/>
<dbReference type="KEGG" id="seg:SG0005"/>
<dbReference type="HOGENOM" id="CLU_061989_0_0_6"/>
<dbReference type="Proteomes" id="UP000008321">
    <property type="component" value="Chromosome"/>
</dbReference>
<dbReference type="GO" id="GO:0005829">
    <property type="term" value="C:cytosol"/>
    <property type="evidence" value="ECO:0007669"/>
    <property type="project" value="TreeGrafter"/>
</dbReference>
<dbReference type="GO" id="GO:0033194">
    <property type="term" value="P:response to hydroperoxide"/>
    <property type="evidence" value="ECO:0007669"/>
    <property type="project" value="TreeGrafter"/>
</dbReference>
<dbReference type="HAMAP" id="MF_00652">
    <property type="entry name" value="UPF0246"/>
    <property type="match status" value="1"/>
</dbReference>
<dbReference type="InterPro" id="IPR005583">
    <property type="entry name" value="YaaA"/>
</dbReference>
<dbReference type="NCBIfam" id="NF002541">
    <property type="entry name" value="PRK02101.1-1"/>
    <property type="match status" value="1"/>
</dbReference>
<dbReference type="NCBIfam" id="NF002542">
    <property type="entry name" value="PRK02101.1-3"/>
    <property type="match status" value="1"/>
</dbReference>
<dbReference type="PANTHER" id="PTHR30283:SF4">
    <property type="entry name" value="PEROXIDE STRESS RESISTANCE PROTEIN YAAA"/>
    <property type="match status" value="1"/>
</dbReference>
<dbReference type="PANTHER" id="PTHR30283">
    <property type="entry name" value="PEROXIDE STRESS RESPONSE PROTEIN YAAA"/>
    <property type="match status" value="1"/>
</dbReference>
<dbReference type="Pfam" id="PF03883">
    <property type="entry name" value="H2O2_YaaD"/>
    <property type="match status" value="1"/>
</dbReference>
<sequence>MLILISPAKTLDYQSPLATTRYTQPELLDHSQQLIQQARQLSAPQISRLMGISDKLADLNATRFHDWQPHFTPDNARQAILAFKGDVYTGLQAETFNDADFDFAQQHLRMLSGLYGVLRPLDLMQPYRLEMGIRLENPRGKDLYQFWGDIITDKLNEALEAQGDRVVVNLASEEYFKSVKPKKLNAELIKPVFLDEKNGKFKVVSFYAKKARGLMSRFIIENRLTKPEQLTAFDREGYFFDEETSTQDELVFKRYEQ</sequence>
<accession>B5RF01</accession>
<protein>
    <recommendedName>
        <fullName evidence="1">UPF0246 protein YaaA</fullName>
    </recommendedName>
</protein>
<reference key="1">
    <citation type="journal article" date="2008" name="Genome Res.">
        <title>Comparative genome analysis of Salmonella enteritidis PT4 and Salmonella gallinarum 287/91 provides insights into evolutionary and host adaptation pathways.</title>
        <authorList>
            <person name="Thomson N.R."/>
            <person name="Clayton D.J."/>
            <person name="Windhorst D."/>
            <person name="Vernikos G."/>
            <person name="Davidson S."/>
            <person name="Churcher C."/>
            <person name="Quail M.A."/>
            <person name="Stevens M."/>
            <person name="Jones M.A."/>
            <person name="Watson M."/>
            <person name="Barron A."/>
            <person name="Layton A."/>
            <person name="Pickard D."/>
            <person name="Kingsley R.A."/>
            <person name="Bignell A."/>
            <person name="Clark L."/>
            <person name="Harris B."/>
            <person name="Ormond D."/>
            <person name="Abdellah Z."/>
            <person name="Brooks K."/>
            <person name="Cherevach I."/>
            <person name="Chillingworth T."/>
            <person name="Woodward J."/>
            <person name="Norberczak H."/>
            <person name="Lord A."/>
            <person name="Arrowsmith C."/>
            <person name="Jagels K."/>
            <person name="Moule S."/>
            <person name="Mungall K."/>
            <person name="Saunders M."/>
            <person name="Whitehead S."/>
            <person name="Chabalgoity J.A."/>
            <person name="Maskell D."/>
            <person name="Humphreys T."/>
            <person name="Roberts M."/>
            <person name="Barrow P.A."/>
            <person name="Dougan G."/>
            <person name="Parkhill J."/>
        </authorList>
    </citation>
    <scope>NUCLEOTIDE SEQUENCE [LARGE SCALE GENOMIC DNA]</scope>
    <source>
        <strain>287/91 / NCTC 13346</strain>
    </source>
</reference>
<proteinExistence type="inferred from homology"/>
<comment type="similarity">
    <text evidence="1">Belongs to the UPF0246 family.</text>
</comment>